<name>RS7_LACDA</name>
<proteinExistence type="inferred from homology"/>
<accession>Q1GBM1</accession>
<sequence length="156" mass="17951">MPRKGHVSKRDVLADPVYNSKLVTKLINHLMKDGKRAQASSILYDAFDIIKDKTGREPMDVFEEAMNNVKPVLEVKARRIGGSNYQVPVEVRPERQTTLALRWLVSYSRLRNEHTMDERLANELIDASNNTGSAVKKREDVHRMAEANRAFAHYRF</sequence>
<organism>
    <name type="scientific">Lactobacillus delbrueckii subsp. bulgaricus (strain ATCC 11842 / DSM 20081 / BCRC 10696 / JCM 1002 / NBRC 13953 / NCIMB 11778 / NCTC 12712 / WDCM 00102 / Lb 14)</name>
    <dbReference type="NCBI Taxonomy" id="390333"/>
    <lineage>
        <taxon>Bacteria</taxon>
        <taxon>Bacillati</taxon>
        <taxon>Bacillota</taxon>
        <taxon>Bacilli</taxon>
        <taxon>Lactobacillales</taxon>
        <taxon>Lactobacillaceae</taxon>
        <taxon>Lactobacillus</taxon>
    </lineage>
</organism>
<keyword id="KW-1185">Reference proteome</keyword>
<keyword id="KW-0687">Ribonucleoprotein</keyword>
<keyword id="KW-0689">Ribosomal protein</keyword>
<keyword id="KW-0694">RNA-binding</keyword>
<keyword id="KW-0699">rRNA-binding</keyword>
<keyword id="KW-0820">tRNA-binding</keyword>
<protein>
    <recommendedName>
        <fullName evidence="1">Small ribosomal subunit protein uS7</fullName>
    </recommendedName>
    <alternativeName>
        <fullName evidence="2">30S ribosomal protein S7</fullName>
    </alternativeName>
</protein>
<feature type="chain" id="PRO_1000014212" description="Small ribosomal subunit protein uS7">
    <location>
        <begin position="1"/>
        <end position="156"/>
    </location>
</feature>
<evidence type="ECO:0000255" key="1">
    <source>
        <dbReference type="HAMAP-Rule" id="MF_00480"/>
    </source>
</evidence>
<evidence type="ECO:0000305" key="2"/>
<reference key="1">
    <citation type="journal article" date="2006" name="Proc. Natl. Acad. Sci. U.S.A.">
        <title>The complete genome sequence of Lactobacillus bulgaricus reveals extensive and ongoing reductive evolution.</title>
        <authorList>
            <person name="van de Guchte M."/>
            <person name="Penaud S."/>
            <person name="Grimaldi C."/>
            <person name="Barbe V."/>
            <person name="Bryson K."/>
            <person name="Nicolas P."/>
            <person name="Robert C."/>
            <person name="Oztas S."/>
            <person name="Mangenot S."/>
            <person name="Couloux A."/>
            <person name="Loux V."/>
            <person name="Dervyn R."/>
            <person name="Bossy R."/>
            <person name="Bolotin A."/>
            <person name="Batto J.-M."/>
            <person name="Walunas T."/>
            <person name="Gibrat J.-F."/>
            <person name="Bessieres P."/>
            <person name="Weissenbach J."/>
            <person name="Ehrlich S.D."/>
            <person name="Maguin E."/>
        </authorList>
    </citation>
    <scope>NUCLEOTIDE SEQUENCE [LARGE SCALE GENOMIC DNA]</scope>
    <source>
        <strain>ATCC 11842 / DSM 20081 / BCRC 10696 / JCM 1002 / NBRC 13953 / NCIMB 11778 / NCTC 12712 / WDCM 00102 / Lb 14</strain>
    </source>
</reference>
<gene>
    <name evidence="1" type="primary">rpsG</name>
    <name type="ordered locus">Ldb0393</name>
</gene>
<comment type="function">
    <text evidence="1">One of the primary rRNA binding proteins, it binds directly to 16S rRNA where it nucleates assembly of the head domain of the 30S subunit. Is located at the subunit interface close to the decoding center, probably blocks exit of the E-site tRNA.</text>
</comment>
<comment type="subunit">
    <text evidence="1">Part of the 30S ribosomal subunit. Contacts proteins S9 and S11.</text>
</comment>
<comment type="similarity">
    <text evidence="1">Belongs to the universal ribosomal protein uS7 family.</text>
</comment>
<dbReference type="EMBL" id="CR954253">
    <property type="protein sequence ID" value="CAI97228.1"/>
    <property type="molecule type" value="Genomic_DNA"/>
</dbReference>
<dbReference type="RefSeq" id="WP_003620824.1">
    <property type="nucleotide sequence ID" value="NZ_JQAV01000001.1"/>
</dbReference>
<dbReference type="SMR" id="Q1GBM1"/>
<dbReference type="STRING" id="390333.Ldb0393"/>
<dbReference type="KEGG" id="ldb:Ldb0393"/>
<dbReference type="PATRIC" id="fig|390333.13.peg.397"/>
<dbReference type="eggNOG" id="COG0049">
    <property type="taxonomic scope" value="Bacteria"/>
</dbReference>
<dbReference type="HOGENOM" id="CLU_072226_1_1_9"/>
<dbReference type="BioCyc" id="LDEL390333:LDB_RS01660-MONOMER"/>
<dbReference type="Proteomes" id="UP000001259">
    <property type="component" value="Chromosome"/>
</dbReference>
<dbReference type="GO" id="GO:0015935">
    <property type="term" value="C:small ribosomal subunit"/>
    <property type="evidence" value="ECO:0007669"/>
    <property type="project" value="InterPro"/>
</dbReference>
<dbReference type="GO" id="GO:0019843">
    <property type="term" value="F:rRNA binding"/>
    <property type="evidence" value="ECO:0007669"/>
    <property type="project" value="UniProtKB-UniRule"/>
</dbReference>
<dbReference type="GO" id="GO:0003735">
    <property type="term" value="F:structural constituent of ribosome"/>
    <property type="evidence" value="ECO:0007669"/>
    <property type="project" value="InterPro"/>
</dbReference>
<dbReference type="GO" id="GO:0000049">
    <property type="term" value="F:tRNA binding"/>
    <property type="evidence" value="ECO:0007669"/>
    <property type="project" value="UniProtKB-UniRule"/>
</dbReference>
<dbReference type="GO" id="GO:0006412">
    <property type="term" value="P:translation"/>
    <property type="evidence" value="ECO:0007669"/>
    <property type="project" value="UniProtKB-UniRule"/>
</dbReference>
<dbReference type="CDD" id="cd14869">
    <property type="entry name" value="uS7_Bacteria"/>
    <property type="match status" value="1"/>
</dbReference>
<dbReference type="FunFam" id="1.10.455.10:FF:000001">
    <property type="entry name" value="30S ribosomal protein S7"/>
    <property type="match status" value="1"/>
</dbReference>
<dbReference type="Gene3D" id="1.10.455.10">
    <property type="entry name" value="Ribosomal protein S7 domain"/>
    <property type="match status" value="1"/>
</dbReference>
<dbReference type="HAMAP" id="MF_00480_B">
    <property type="entry name" value="Ribosomal_uS7_B"/>
    <property type="match status" value="1"/>
</dbReference>
<dbReference type="InterPro" id="IPR000235">
    <property type="entry name" value="Ribosomal_uS7"/>
</dbReference>
<dbReference type="InterPro" id="IPR005717">
    <property type="entry name" value="Ribosomal_uS7_bac/org-type"/>
</dbReference>
<dbReference type="InterPro" id="IPR020606">
    <property type="entry name" value="Ribosomal_uS7_CS"/>
</dbReference>
<dbReference type="InterPro" id="IPR023798">
    <property type="entry name" value="Ribosomal_uS7_dom"/>
</dbReference>
<dbReference type="InterPro" id="IPR036823">
    <property type="entry name" value="Ribosomal_uS7_dom_sf"/>
</dbReference>
<dbReference type="NCBIfam" id="TIGR01029">
    <property type="entry name" value="rpsG_bact"/>
    <property type="match status" value="1"/>
</dbReference>
<dbReference type="PANTHER" id="PTHR11205">
    <property type="entry name" value="RIBOSOMAL PROTEIN S7"/>
    <property type="match status" value="1"/>
</dbReference>
<dbReference type="Pfam" id="PF00177">
    <property type="entry name" value="Ribosomal_S7"/>
    <property type="match status" value="1"/>
</dbReference>
<dbReference type="PIRSF" id="PIRSF002122">
    <property type="entry name" value="RPS7p_RPS7a_RPS5e_RPS7o"/>
    <property type="match status" value="1"/>
</dbReference>
<dbReference type="SUPFAM" id="SSF47973">
    <property type="entry name" value="Ribosomal protein S7"/>
    <property type="match status" value="1"/>
</dbReference>
<dbReference type="PROSITE" id="PS00052">
    <property type="entry name" value="RIBOSOMAL_S7"/>
    <property type="match status" value="1"/>
</dbReference>